<comment type="function">
    <text evidence="1">Catalyzes the conversion of uracil and 5-phospho-alpha-D-ribose 1-diphosphate (PRPP) to UMP and diphosphate.</text>
</comment>
<comment type="catalytic activity">
    <reaction evidence="1">
        <text>UMP + diphosphate = 5-phospho-alpha-D-ribose 1-diphosphate + uracil</text>
        <dbReference type="Rhea" id="RHEA:13017"/>
        <dbReference type="ChEBI" id="CHEBI:17568"/>
        <dbReference type="ChEBI" id="CHEBI:33019"/>
        <dbReference type="ChEBI" id="CHEBI:57865"/>
        <dbReference type="ChEBI" id="CHEBI:58017"/>
        <dbReference type="EC" id="2.4.2.9"/>
    </reaction>
</comment>
<comment type="cofactor">
    <cofactor evidence="1">
        <name>Mg(2+)</name>
        <dbReference type="ChEBI" id="CHEBI:18420"/>
    </cofactor>
    <text evidence="1">Binds 1 Mg(2+) ion per subunit. The magnesium is bound as Mg-PRPP.</text>
</comment>
<comment type="activity regulation">
    <text evidence="1">Allosterically activated by GTP.</text>
</comment>
<comment type="pathway">
    <text evidence="1">Pyrimidine metabolism; UMP biosynthesis via salvage pathway; UMP from uracil: step 1/1.</text>
</comment>
<comment type="similarity">
    <text evidence="1">Belongs to the UPRTase family.</text>
</comment>
<organism>
    <name type="scientific">Neisseria meningitidis serogroup A / serotype 4A (strain DSM 15465 / Z2491)</name>
    <dbReference type="NCBI Taxonomy" id="122587"/>
    <lineage>
        <taxon>Bacteria</taxon>
        <taxon>Pseudomonadati</taxon>
        <taxon>Pseudomonadota</taxon>
        <taxon>Betaproteobacteria</taxon>
        <taxon>Neisseriales</taxon>
        <taxon>Neisseriaceae</taxon>
        <taxon>Neisseria</taxon>
    </lineage>
</organism>
<proteinExistence type="inferred from homology"/>
<evidence type="ECO:0000255" key="1">
    <source>
        <dbReference type="HAMAP-Rule" id="MF_01218"/>
    </source>
</evidence>
<sequence>MNVNVINHPLVRHKLTLMREADCSTYKFRTLATELARLMAYEASRDFEIEKYLIDGWCGQIEGDRIKGKTLTVVPILRAGLGMLDGVLDLIPTAKISVVGLQRDEETLKPVSYFEKFVDSMDERPALIIDPMLATGGSMVATIDLLKAKGCKNIKALVLVAAPEGVKAVNDAHPDVTIYTAALDSHLNENGYIIPGLGDAGDKIFGTR</sequence>
<gene>
    <name evidence="1" type="primary">upp</name>
    <name type="ordered locus">NMA0985</name>
</gene>
<accession>Q9JV58</accession>
<accession>A1IR24</accession>
<protein>
    <recommendedName>
        <fullName evidence="1">Uracil phosphoribosyltransferase</fullName>
        <ecNumber evidence="1">2.4.2.9</ecNumber>
    </recommendedName>
    <alternativeName>
        <fullName evidence="1">UMP pyrophosphorylase</fullName>
    </alternativeName>
    <alternativeName>
        <fullName evidence="1">UPRTase</fullName>
    </alternativeName>
</protein>
<feature type="chain" id="PRO_0000120860" description="Uracil phosphoribosyltransferase">
    <location>
        <begin position="1"/>
        <end position="208"/>
    </location>
</feature>
<feature type="binding site" evidence="1">
    <location>
        <position position="78"/>
    </location>
    <ligand>
        <name>5-phospho-alpha-D-ribose 1-diphosphate</name>
        <dbReference type="ChEBI" id="CHEBI:58017"/>
    </ligand>
</feature>
<feature type="binding site" evidence="1">
    <location>
        <position position="103"/>
    </location>
    <ligand>
        <name>5-phospho-alpha-D-ribose 1-diphosphate</name>
        <dbReference type="ChEBI" id="CHEBI:58017"/>
    </ligand>
</feature>
<feature type="binding site" evidence="1">
    <location>
        <begin position="130"/>
        <end position="138"/>
    </location>
    <ligand>
        <name>5-phospho-alpha-D-ribose 1-diphosphate</name>
        <dbReference type="ChEBI" id="CHEBI:58017"/>
    </ligand>
</feature>
<feature type="binding site" evidence="1">
    <location>
        <position position="193"/>
    </location>
    <ligand>
        <name>uracil</name>
        <dbReference type="ChEBI" id="CHEBI:17568"/>
    </ligand>
</feature>
<feature type="binding site" evidence="1">
    <location>
        <begin position="198"/>
        <end position="200"/>
    </location>
    <ligand>
        <name>uracil</name>
        <dbReference type="ChEBI" id="CHEBI:17568"/>
    </ligand>
</feature>
<feature type="binding site" evidence="1">
    <location>
        <position position="199"/>
    </location>
    <ligand>
        <name>5-phospho-alpha-D-ribose 1-diphosphate</name>
        <dbReference type="ChEBI" id="CHEBI:58017"/>
    </ligand>
</feature>
<name>UPP_NEIMA</name>
<keyword id="KW-0021">Allosteric enzyme</keyword>
<keyword id="KW-0328">Glycosyltransferase</keyword>
<keyword id="KW-0342">GTP-binding</keyword>
<keyword id="KW-0460">Magnesium</keyword>
<keyword id="KW-0547">Nucleotide-binding</keyword>
<keyword id="KW-0808">Transferase</keyword>
<dbReference type="EC" id="2.4.2.9" evidence="1"/>
<dbReference type="EMBL" id="AL157959">
    <property type="protein sequence ID" value="CAM08208.1"/>
    <property type="molecule type" value="Genomic_DNA"/>
</dbReference>
<dbReference type="PIR" id="H81945">
    <property type="entry name" value="H81945"/>
</dbReference>
<dbReference type="RefSeq" id="WP_002246895.1">
    <property type="nucleotide sequence ID" value="NC_003116.1"/>
</dbReference>
<dbReference type="SMR" id="Q9JV58"/>
<dbReference type="EnsemblBacteria" id="CAM08208">
    <property type="protein sequence ID" value="CAM08208"/>
    <property type="gene ID" value="NMA0985"/>
</dbReference>
<dbReference type="GeneID" id="83614707"/>
<dbReference type="KEGG" id="nma:NMA0985"/>
<dbReference type="HOGENOM" id="CLU_067096_2_2_4"/>
<dbReference type="UniPathway" id="UPA00574">
    <property type="reaction ID" value="UER00636"/>
</dbReference>
<dbReference type="Proteomes" id="UP000000626">
    <property type="component" value="Chromosome"/>
</dbReference>
<dbReference type="GO" id="GO:0005525">
    <property type="term" value="F:GTP binding"/>
    <property type="evidence" value="ECO:0007669"/>
    <property type="project" value="UniProtKB-KW"/>
</dbReference>
<dbReference type="GO" id="GO:0000287">
    <property type="term" value="F:magnesium ion binding"/>
    <property type="evidence" value="ECO:0007669"/>
    <property type="project" value="UniProtKB-UniRule"/>
</dbReference>
<dbReference type="GO" id="GO:0004845">
    <property type="term" value="F:uracil phosphoribosyltransferase activity"/>
    <property type="evidence" value="ECO:0007669"/>
    <property type="project" value="UniProtKB-UniRule"/>
</dbReference>
<dbReference type="GO" id="GO:0044206">
    <property type="term" value="P:UMP salvage"/>
    <property type="evidence" value="ECO:0007669"/>
    <property type="project" value="UniProtKB-UniRule"/>
</dbReference>
<dbReference type="GO" id="GO:0006223">
    <property type="term" value="P:uracil salvage"/>
    <property type="evidence" value="ECO:0007669"/>
    <property type="project" value="InterPro"/>
</dbReference>
<dbReference type="CDD" id="cd06223">
    <property type="entry name" value="PRTases_typeI"/>
    <property type="match status" value="1"/>
</dbReference>
<dbReference type="FunFam" id="3.40.50.2020:FF:000003">
    <property type="entry name" value="Uracil phosphoribosyltransferase"/>
    <property type="match status" value="1"/>
</dbReference>
<dbReference type="Gene3D" id="3.40.50.2020">
    <property type="match status" value="1"/>
</dbReference>
<dbReference type="HAMAP" id="MF_01218_B">
    <property type="entry name" value="Upp_B"/>
    <property type="match status" value="1"/>
</dbReference>
<dbReference type="InterPro" id="IPR000836">
    <property type="entry name" value="PRibTrfase_dom"/>
</dbReference>
<dbReference type="InterPro" id="IPR029057">
    <property type="entry name" value="PRTase-like"/>
</dbReference>
<dbReference type="InterPro" id="IPR034332">
    <property type="entry name" value="Upp_B"/>
</dbReference>
<dbReference type="InterPro" id="IPR050054">
    <property type="entry name" value="UPRTase/APRTase"/>
</dbReference>
<dbReference type="InterPro" id="IPR005765">
    <property type="entry name" value="Ura_phspho_trans"/>
</dbReference>
<dbReference type="NCBIfam" id="NF001097">
    <property type="entry name" value="PRK00129.1"/>
    <property type="match status" value="1"/>
</dbReference>
<dbReference type="NCBIfam" id="TIGR01091">
    <property type="entry name" value="upp"/>
    <property type="match status" value="1"/>
</dbReference>
<dbReference type="PANTHER" id="PTHR32315">
    <property type="entry name" value="ADENINE PHOSPHORIBOSYLTRANSFERASE"/>
    <property type="match status" value="1"/>
</dbReference>
<dbReference type="PANTHER" id="PTHR32315:SF4">
    <property type="entry name" value="URACIL PHOSPHORIBOSYLTRANSFERASE, CHLOROPLASTIC"/>
    <property type="match status" value="1"/>
</dbReference>
<dbReference type="Pfam" id="PF14681">
    <property type="entry name" value="UPRTase"/>
    <property type="match status" value="1"/>
</dbReference>
<dbReference type="SUPFAM" id="SSF53271">
    <property type="entry name" value="PRTase-like"/>
    <property type="match status" value="1"/>
</dbReference>
<reference key="1">
    <citation type="journal article" date="2000" name="Nature">
        <title>Complete DNA sequence of a serogroup A strain of Neisseria meningitidis Z2491.</title>
        <authorList>
            <person name="Parkhill J."/>
            <person name="Achtman M."/>
            <person name="James K.D."/>
            <person name="Bentley S.D."/>
            <person name="Churcher C.M."/>
            <person name="Klee S.R."/>
            <person name="Morelli G."/>
            <person name="Basham D."/>
            <person name="Brown D."/>
            <person name="Chillingworth T."/>
            <person name="Davies R.M."/>
            <person name="Davis P."/>
            <person name="Devlin K."/>
            <person name="Feltwell T."/>
            <person name="Hamlin N."/>
            <person name="Holroyd S."/>
            <person name="Jagels K."/>
            <person name="Leather S."/>
            <person name="Moule S."/>
            <person name="Mungall K.L."/>
            <person name="Quail M.A."/>
            <person name="Rajandream M.A."/>
            <person name="Rutherford K.M."/>
            <person name="Simmonds M."/>
            <person name="Skelton J."/>
            <person name="Whitehead S."/>
            <person name="Spratt B.G."/>
            <person name="Barrell B.G."/>
        </authorList>
    </citation>
    <scope>NUCLEOTIDE SEQUENCE [LARGE SCALE GENOMIC DNA]</scope>
    <source>
        <strain>DSM 15465 / Z2491</strain>
    </source>
</reference>